<sequence>MWMTYQPKKKQRKREHGFRKRMRTLSGRNVIKRRRQKGRKRLTA</sequence>
<name>RL34_CLOK1</name>
<comment type="similarity">
    <text evidence="1">Belongs to the bacterial ribosomal protein bL34 family.</text>
</comment>
<organism>
    <name type="scientific">Clostridium kluyveri (strain NBRC 12016)</name>
    <dbReference type="NCBI Taxonomy" id="583346"/>
    <lineage>
        <taxon>Bacteria</taxon>
        <taxon>Bacillati</taxon>
        <taxon>Bacillota</taxon>
        <taxon>Clostridia</taxon>
        <taxon>Eubacteriales</taxon>
        <taxon>Clostridiaceae</taxon>
        <taxon>Clostridium</taxon>
    </lineage>
</organism>
<feature type="chain" id="PRO_1000134436" description="Large ribosomal subunit protein bL34">
    <location>
        <begin position="1"/>
        <end position="44"/>
    </location>
</feature>
<feature type="region of interest" description="Disordered" evidence="2">
    <location>
        <begin position="1"/>
        <end position="20"/>
    </location>
</feature>
<feature type="compositionally biased region" description="Basic residues" evidence="2">
    <location>
        <begin position="7"/>
        <end position="20"/>
    </location>
</feature>
<protein>
    <recommendedName>
        <fullName evidence="1">Large ribosomal subunit protein bL34</fullName>
    </recommendedName>
    <alternativeName>
        <fullName evidence="3">50S ribosomal protein L34</fullName>
    </alternativeName>
</protein>
<evidence type="ECO:0000255" key="1">
    <source>
        <dbReference type="HAMAP-Rule" id="MF_00391"/>
    </source>
</evidence>
<evidence type="ECO:0000256" key="2">
    <source>
        <dbReference type="SAM" id="MobiDB-lite"/>
    </source>
</evidence>
<evidence type="ECO:0000305" key="3"/>
<keyword id="KW-0687">Ribonucleoprotein</keyword>
<keyword id="KW-0689">Ribosomal protein</keyword>
<gene>
    <name evidence="1" type="primary">rpmH</name>
    <name type="ordered locus">CKR_3468</name>
</gene>
<accession>B9DXS6</accession>
<dbReference type="EMBL" id="AP009049">
    <property type="protein sequence ID" value="BAH08519.1"/>
    <property type="molecule type" value="Genomic_DNA"/>
</dbReference>
<dbReference type="RefSeq" id="WP_012104240.1">
    <property type="nucleotide sequence ID" value="NC_011837.1"/>
</dbReference>
<dbReference type="SMR" id="B9DXS6"/>
<dbReference type="KEGG" id="ckr:CKR_3468"/>
<dbReference type="HOGENOM" id="CLU_129938_2_0_9"/>
<dbReference type="Proteomes" id="UP000007969">
    <property type="component" value="Chromosome"/>
</dbReference>
<dbReference type="GO" id="GO:1990904">
    <property type="term" value="C:ribonucleoprotein complex"/>
    <property type="evidence" value="ECO:0007669"/>
    <property type="project" value="UniProtKB-KW"/>
</dbReference>
<dbReference type="GO" id="GO:0005840">
    <property type="term" value="C:ribosome"/>
    <property type="evidence" value="ECO:0007669"/>
    <property type="project" value="UniProtKB-KW"/>
</dbReference>
<dbReference type="GO" id="GO:0003735">
    <property type="term" value="F:structural constituent of ribosome"/>
    <property type="evidence" value="ECO:0007669"/>
    <property type="project" value="InterPro"/>
</dbReference>
<dbReference type="GO" id="GO:0006412">
    <property type="term" value="P:translation"/>
    <property type="evidence" value="ECO:0007669"/>
    <property type="project" value="UniProtKB-UniRule"/>
</dbReference>
<dbReference type="FunFam" id="1.10.287.3980:FF:000001">
    <property type="entry name" value="Mitochondrial ribosomal protein L34"/>
    <property type="match status" value="1"/>
</dbReference>
<dbReference type="Gene3D" id="1.10.287.3980">
    <property type="match status" value="1"/>
</dbReference>
<dbReference type="HAMAP" id="MF_00391">
    <property type="entry name" value="Ribosomal_bL34"/>
    <property type="match status" value="1"/>
</dbReference>
<dbReference type="InterPro" id="IPR000271">
    <property type="entry name" value="Ribosomal_bL34"/>
</dbReference>
<dbReference type="NCBIfam" id="TIGR01030">
    <property type="entry name" value="rpmH_bact"/>
    <property type="match status" value="1"/>
</dbReference>
<dbReference type="PANTHER" id="PTHR14503:SF4">
    <property type="entry name" value="LARGE RIBOSOMAL SUBUNIT PROTEIN BL34M"/>
    <property type="match status" value="1"/>
</dbReference>
<dbReference type="PANTHER" id="PTHR14503">
    <property type="entry name" value="MITOCHONDRIAL RIBOSOMAL PROTEIN 34 FAMILY MEMBER"/>
    <property type="match status" value="1"/>
</dbReference>
<dbReference type="Pfam" id="PF00468">
    <property type="entry name" value="Ribosomal_L34"/>
    <property type="match status" value="1"/>
</dbReference>
<proteinExistence type="inferred from homology"/>
<reference key="1">
    <citation type="submission" date="2005-09" db="EMBL/GenBank/DDBJ databases">
        <title>Complete genome sequence of Clostridium kluyveri and comparative genomics of Clostridia species.</title>
        <authorList>
            <person name="Inui M."/>
            <person name="Nonaka H."/>
            <person name="Shinoda Y."/>
            <person name="Ikenaga Y."/>
            <person name="Abe M."/>
            <person name="Naito K."/>
            <person name="Vertes A.A."/>
            <person name="Yukawa H."/>
        </authorList>
    </citation>
    <scope>NUCLEOTIDE SEQUENCE [LARGE SCALE GENOMIC DNA]</scope>
    <source>
        <strain>NBRC 12016</strain>
    </source>
</reference>